<dbReference type="EMBL" id="Y13917">
    <property type="protein sequence ID" value="CAA74220.1"/>
    <property type="molecule type" value="Genomic_DNA"/>
</dbReference>
<dbReference type="EMBL" id="AL009126">
    <property type="protein sequence ID" value="CAB13710.1"/>
    <property type="molecule type" value="Genomic_DNA"/>
</dbReference>
<dbReference type="PIR" id="G69894">
    <property type="entry name" value="G69894"/>
</dbReference>
<dbReference type="RefSeq" id="NP_389709.1">
    <property type="nucleotide sequence ID" value="NC_000964.3"/>
</dbReference>
<dbReference type="RefSeq" id="WP_003245257.1">
    <property type="nucleotide sequence ID" value="NZ_OZ025638.1"/>
</dbReference>
<dbReference type="FunCoup" id="O34356">
    <property type="interactions" value="153"/>
</dbReference>
<dbReference type="STRING" id="224308.BSU18270"/>
<dbReference type="PaxDb" id="224308-BSU18270"/>
<dbReference type="EnsemblBacteria" id="CAB13710">
    <property type="protein sequence ID" value="CAB13710"/>
    <property type="gene ID" value="BSU_18270"/>
</dbReference>
<dbReference type="GeneID" id="939980"/>
<dbReference type="KEGG" id="bsu:BSU18270"/>
<dbReference type="PATRIC" id="fig|224308.179.peg.1993"/>
<dbReference type="InParanoid" id="O34356"/>
<dbReference type="OrthoDB" id="2679428at2"/>
<dbReference type="BioCyc" id="BSUB:BSU18270-MONOMER"/>
<dbReference type="Proteomes" id="UP000001570">
    <property type="component" value="Chromosome"/>
</dbReference>
<dbReference type="GO" id="GO:0005886">
    <property type="term" value="C:plasma membrane"/>
    <property type="evidence" value="ECO:0007669"/>
    <property type="project" value="UniProtKB-SubCell"/>
</dbReference>
<dbReference type="InterPro" id="IPR020509">
    <property type="entry name" value="Uncharacterised_YnzE"/>
</dbReference>
<dbReference type="Pfam" id="PF17329">
    <property type="entry name" value="DUF5367"/>
    <property type="match status" value="1"/>
</dbReference>
<sequence length="101" mass="11237">MLTDPAEEAFLPNFLLLGAGTALVLCLVFFLYQKLDQSQFAVIKLGIWGSAVGLLMDTISLWNLPLIFPALSKGQVIAFTIWMVCAYCMYLLIPLILSHKK</sequence>
<feature type="chain" id="PRO_0000049650" description="Uncharacterized protein YnzE">
    <location>
        <begin position="1"/>
        <end position="101"/>
    </location>
</feature>
<feature type="transmembrane region" description="Helical" evidence="1">
    <location>
        <begin position="10"/>
        <end position="32"/>
    </location>
</feature>
<feature type="transmembrane region" description="Helical" evidence="1">
    <location>
        <begin position="45"/>
        <end position="67"/>
    </location>
</feature>
<feature type="transmembrane region" description="Helical" evidence="1">
    <location>
        <begin position="77"/>
        <end position="99"/>
    </location>
</feature>
<reference key="1">
    <citation type="journal article" date="1997" name="Microbiology">
        <title>Sequence completion, identification and definition of the fengycin operon in Bacillus subtilis 168.</title>
        <authorList>
            <person name="Tosato V."/>
            <person name="Albertini A.M."/>
            <person name="Zotti M."/>
            <person name="Sonda S."/>
            <person name="Bruschi C.V."/>
        </authorList>
    </citation>
    <scope>NUCLEOTIDE SEQUENCE [GENOMIC DNA]</scope>
    <source>
        <strain>168</strain>
    </source>
</reference>
<reference key="2">
    <citation type="journal article" date="1997" name="Nature">
        <title>The complete genome sequence of the Gram-positive bacterium Bacillus subtilis.</title>
        <authorList>
            <person name="Kunst F."/>
            <person name="Ogasawara N."/>
            <person name="Moszer I."/>
            <person name="Albertini A.M."/>
            <person name="Alloni G."/>
            <person name="Azevedo V."/>
            <person name="Bertero M.G."/>
            <person name="Bessieres P."/>
            <person name="Bolotin A."/>
            <person name="Borchert S."/>
            <person name="Borriss R."/>
            <person name="Boursier L."/>
            <person name="Brans A."/>
            <person name="Braun M."/>
            <person name="Brignell S.C."/>
            <person name="Bron S."/>
            <person name="Brouillet S."/>
            <person name="Bruschi C.V."/>
            <person name="Caldwell B."/>
            <person name="Capuano V."/>
            <person name="Carter N.M."/>
            <person name="Choi S.-K."/>
            <person name="Codani J.-J."/>
            <person name="Connerton I.F."/>
            <person name="Cummings N.J."/>
            <person name="Daniel R.A."/>
            <person name="Denizot F."/>
            <person name="Devine K.M."/>
            <person name="Duesterhoeft A."/>
            <person name="Ehrlich S.D."/>
            <person name="Emmerson P.T."/>
            <person name="Entian K.-D."/>
            <person name="Errington J."/>
            <person name="Fabret C."/>
            <person name="Ferrari E."/>
            <person name="Foulger D."/>
            <person name="Fritz C."/>
            <person name="Fujita M."/>
            <person name="Fujita Y."/>
            <person name="Fuma S."/>
            <person name="Galizzi A."/>
            <person name="Galleron N."/>
            <person name="Ghim S.-Y."/>
            <person name="Glaser P."/>
            <person name="Goffeau A."/>
            <person name="Golightly E.J."/>
            <person name="Grandi G."/>
            <person name="Guiseppi G."/>
            <person name="Guy B.J."/>
            <person name="Haga K."/>
            <person name="Haiech J."/>
            <person name="Harwood C.R."/>
            <person name="Henaut A."/>
            <person name="Hilbert H."/>
            <person name="Holsappel S."/>
            <person name="Hosono S."/>
            <person name="Hullo M.-F."/>
            <person name="Itaya M."/>
            <person name="Jones L.-M."/>
            <person name="Joris B."/>
            <person name="Karamata D."/>
            <person name="Kasahara Y."/>
            <person name="Klaerr-Blanchard M."/>
            <person name="Klein C."/>
            <person name="Kobayashi Y."/>
            <person name="Koetter P."/>
            <person name="Koningstein G."/>
            <person name="Krogh S."/>
            <person name="Kumano M."/>
            <person name="Kurita K."/>
            <person name="Lapidus A."/>
            <person name="Lardinois S."/>
            <person name="Lauber J."/>
            <person name="Lazarevic V."/>
            <person name="Lee S.-M."/>
            <person name="Levine A."/>
            <person name="Liu H."/>
            <person name="Masuda S."/>
            <person name="Mauel C."/>
            <person name="Medigue C."/>
            <person name="Medina N."/>
            <person name="Mellado R.P."/>
            <person name="Mizuno M."/>
            <person name="Moestl D."/>
            <person name="Nakai S."/>
            <person name="Noback M."/>
            <person name="Noone D."/>
            <person name="O'Reilly M."/>
            <person name="Ogawa K."/>
            <person name="Ogiwara A."/>
            <person name="Oudega B."/>
            <person name="Park S.-H."/>
            <person name="Parro V."/>
            <person name="Pohl T.M."/>
            <person name="Portetelle D."/>
            <person name="Porwollik S."/>
            <person name="Prescott A.M."/>
            <person name="Presecan E."/>
            <person name="Pujic P."/>
            <person name="Purnelle B."/>
            <person name="Rapoport G."/>
            <person name="Rey M."/>
            <person name="Reynolds S."/>
            <person name="Rieger M."/>
            <person name="Rivolta C."/>
            <person name="Rocha E."/>
            <person name="Roche B."/>
            <person name="Rose M."/>
            <person name="Sadaie Y."/>
            <person name="Sato T."/>
            <person name="Scanlan E."/>
            <person name="Schleich S."/>
            <person name="Schroeter R."/>
            <person name="Scoffone F."/>
            <person name="Sekiguchi J."/>
            <person name="Sekowska A."/>
            <person name="Seror S.J."/>
            <person name="Serror P."/>
            <person name="Shin B.-S."/>
            <person name="Soldo B."/>
            <person name="Sorokin A."/>
            <person name="Tacconi E."/>
            <person name="Takagi T."/>
            <person name="Takahashi H."/>
            <person name="Takemaru K."/>
            <person name="Takeuchi M."/>
            <person name="Tamakoshi A."/>
            <person name="Tanaka T."/>
            <person name="Terpstra P."/>
            <person name="Tognoni A."/>
            <person name="Tosato V."/>
            <person name="Uchiyama S."/>
            <person name="Vandenbol M."/>
            <person name="Vannier F."/>
            <person name="Vassarotti A."/>
            <person name="Viari A."/>
            <person name="Wambutt R."/>
            <person name="Wedler E."/>
            <person name="Wedler H."/>
            <person name="Weitzenegger T."/>
            <person name="Winters P."/>
            <person name="Wipat A."/>
            <person name="Yamamoto H."/>
            <person name="Yamane K."/>
            <person name="Yasumoto K."/>
            <person name="Yata K."/>
            <person name="Yoshida K."/>
            <person name="Yoshikawa H.-F."/>
            <person name="Zumstein E."/>
            <person name="Yoshikawa H."/>
            <person name="Danchin A."/>
        </authorList>
    </citation>
    <scope>NUCLEOTIDE SEQUENCE [LARGE SCALE GENOMIC DNA]</scope>
    <source>
        <strain>168</strain>
    </source>
</reference>
<comment type="subcellular location">
    <subcellularLocation>
        <location evidence="2">Cell membrane</location>
        <topology evidence="2">Multi-pass membrane protein</topology>
    </subcellularLocation>
</comment>
<gene>
    <name type="primary">ynzE</name>
    <name type="ordered locus">BSU18270</name>
</gene>
<protein>
    <recommendedName>
        <fullName>Uncharacterized protein YnzE</fullName>
    </recommendedName>
</protein>
<name>YNZE_BACSU</name>
<accession>O34356</accession>
<proteinExistence type="predicted"/>
<keyword id="KW-1003">Cell membrane</keyword>
<keyword id="KW-0472">Membrane</keyword>
<keyword id="KW-1185">Reference proteome</keyword>
<keyword id="KW-0812">Transmembrane</keyword>
<keyword id="KW-1133">Transmembrane helix</keyword>
<evidence type="ECO:0000255" key="1"/>
<evidence type="ECO:0000305" key="2"/>
<organism>
    <name type="scientific">Bacillus subtilis (strain 168)</name>
    <dbReference type="NCBI Taxonomy" id="224308"/>
    <lineage>
        <taxon>Bacteria</taxon>
        <taxon>Bacillati</taxon>
        <taxon>Bacillota</taxon>
        <taxon>Bacilli</taxon>
        <taxon>Bacillales</taxon>
        <taxon>Bacillaceae</taxon>
        <taxon>Bacillus</taxon>
    </lineage>
</organism>